<gene>
    <name evidence="1" type="primary">atpG</name>
    <name type="ordered locus">Mmc1_3459</name>
</gene>
<name>ATPG_MAGMM</name>
<keyword id="KW-0066">ATP synthesis</keyword>
<keyword id="KW-0997">Cell inner membrane</keyword>
<keyword id="KW-1003">Cell membrane</keyword>
<keyword id="KW-0139">CF(1)</keyword>
<keyword id="KW-0375">Hydrogen ion transport</keyword>
<keyword id="KW-0406">Ion transport</keyword>
<keyword id="KW-0472">Membrane</keyword>
<keyword id="KW-1185">Reference proteome</keyword>
<keyword id="KW-0813">Transport</keyword>
<comment type="function">
    <text evidence="1">Produces ATP from ADP in the presence of a proton gradient across the membrane. The gamma chain is believed to be important in regulating ATPase activity and the flow of protons through the CF(0) complex.</text>
</comment>
<comment type="subunit">
    <text evidence="1">F-type ATPases have 2 components, CF(1) - the catalytic core - and CF(0) - the membrane proton channel. CF(1) has five subunits: alpha(3), beta(3), gamma(1), delta(1), epsilon(1). CF(0) has three main subunits: a, b and c.</text>
</comment>
<comment type="subcellular location">
    <subcellularLocation>
        <location evidence="1">Cell inner membrane</location>
        <topology evidence="1">Peripheral membrane protein</topology>
    </subcellularLocation>
</comment>
<comment type="similarity">
    <text evidence="1">Belongs to the ATPase gamma chain family.</text>
</comment>
<sequence length="292" mass="32634">MANLKALKVRIGSVKNTRQITKAMKMVAAAKLRKATEQAESARPYSKRMSRMMHSLAPAAAGRDNAPELLVGRGDVKKVNLVVYTADRGLCGSFNSVVIRATRARIAELEKQGFQVMLTFIGRKAYDVLKRSHGHLVRKVYTEMSRHMSFAYVEKNIVKELIKDFHEGQFDACYLVFNQFKSAMSQELTWAQSIPQPIDTEGASTQTGYQFEPVEEELLEELLPRNLAVQVFQALAESEASEHGSRMTAMDNAVRNAGDMVKKLQTKYNRSRQAAITTELIEIISGAESLKG</sequence>
<reference key="1">
    <citation type="journal article" date="2009" name="Appl. Environ. Microbiol.">
        <title>Complete genome sequence of the chemolithoautotrophic marine magnetotactic coccus strain MC-1.</title>
        <authorList>
            <person name="Schubbe S."/>
            <person name="Williams T.J."/>
            <person name="Xie G."/>
            <person name="Kiss H.E."/>
            <person name="Brettin T.S."/>
            <person name="Martinez D."/>
            <person name="Ross C.A."/>
            <person name="Schuler D."/>
            <person name="Cox B.L."/>
            <person name="Nealson K.H."/>
            <person name="Bazylinski D.A."/>
        </authorList>
    </citation>
    <scope>NUCLEOTIDE SEQUENCE [LARGE SCALE GENOMIC DNA]</scope>
    <source>
        <strain>ATCC BAA-1437 / JCM 17883 / MC-1</strain>
    </source>
</reference>
<proteinExistence type="inferred from homology"/>
<protein>
    <recommendedName>
        <fullName evidence="1">ATP synthase gamma chain</fullName>
    </recommendedName>
    <alternativeName>
        <fullName evidence="1">ATP synthase F1 sector gamma subunit</fullName>
    </alternativeName>
    <alternativeName>
        <fullName evidence="1">F-ATPase gamma subunit</fullName>
    </alternativeName>
</protein>
<dbReference type="EMBL" id="CP000471">
    <property type="protein sequence ID" value="ABK45944.1"/>
    <property type="molecule type" value="Genomic_DNA"/>
</dbReference>
<dbReference type="RefSeq" id="WP_011715000.1">
    <property type="nucleotide sequence ID" value="NC_008576.1"/>
</dbReference>
<dbReference type="SMR" id="A0LDA1"/>
<dbReference type="STRING" id="156889.Mmc1_3459"/>
<dbReference type="KEGG" id="mgm:Mmc1_3459"/>
<dbReference type="eggNOG" id="COG0224">
    <property type="taxonomic scope" value="Bacteria"/>
</dbReference>
<dbReference type="HOGENOM" id="CLU_050669_0_1_5"/>
<dbReference type="OrthoDB" id="9812769at2"/>
<dbReference type="Proteomes" id="UP000002586">
    <property type="component" value="Chromosome"/>
</dbReference>
<dbReference type="GO" id="GO:0005886">
    <property type="term" value="C:plasma membrane"/>
    <property type="evidence" value="ECO:0007669"/>
    <property type="project" value="UniProtKB-SubCell"/>
</dbReference>
<dbReference type="GO" id="GO:0045259">
    <property type="term" value="C:proton-transporting ATP synthase complex"/>
    <property type="evidence" value="ECO:0007669"/>
    <property type="project" value="UniProtKB-KW"/>
</dbReference>
<dbReference type="GO" id="GO:0005524">
    <property type="term" value="F:ATP binding"/>
    <property type="evidence" value="ECO:0007669"/>
    <property type="project" value="UniProtKB-UniRule"/>
</dbReference>
<dbReference type="GO" id="GO:0046933">
    <property type="term" value="F:proton-transporting ATP synthase activity, rotational mechanism"/>
    <property type="evidence" value="ECO:0007669"/>
    <property type="project" value="UniProtKB-UniRule"/>
</dbReference>
<dbReference type="GO" id="GO:0042777">
    <property type="term" value="P:proton motive force-driven plasma membrane ATP synthesis"/>
    <property type="evidence" value="ECO:0007669"/>
    <property type="project" value="UniProtKB-UniRule"/>
</dbReference>
<dbReference type="CDD" id="cd12151">
    <property type="entry name" value="F1-ATPase_gamma"/>
    <property type="match status" value="1"/>
</dbReference>
<dbReference type="FunFam" id="1.10.287.80:FF:000001">
    <property type="entry name" value="ATP synthase gamma chain"/>
    <property type="match status" value="1"/>
</dbReference>
<dbReference type="Gene3D" id="3.40.1380.10">
    <property type="match status" value="1"/>
</dbReference>
<dbReference type="Gene3D" id="1.10.287.80">
    <property type="entry name" value="ATP synthase, gamma subunit, helix hairpin domain"/>
    <property type="match status" value="1"/>
</dbReference>
<dbReference type="HAMAP" id="MF_00815">
    <property type="entry name" value="ATP_synth_gamma_bact"/>
    <property type="match status" value="1"/>
</dbReference>
<dbReference type="InterPro" id="IPR035968">
    <property type="entry name" value="ATP_synth_F1_ATPase_gsu"/>
</dbReference>
<dbReference type="InterPro" id="IPR000131">
    <property type="entry name" value="ATP_synth_F1_gsu"/>
</dbReference>
<dbReference type="InterPro" id="IPR023632">
    <property type="entry name" value="ATP_synth_F1_gsu_CS"/>
</dbReference>
<dbReference type="NCBIfam" id="TIGR01146">
    <property type="entry name" value="ATPsyn_F1gamma"/>
    <property type="match status" value="1"/>
</dbReference>
<dbReference type="NCBIfam" id="NF004146">
    <property type="entry name" value="PRK05621.1-4"/>
    <property type="match status" value="1"/>
</dbReference>
<dbReference type="PANTHER" id="PTHR11693">
    <property type="entry name" value="ATP SYNTHASE GAMMA CHAIN"/>
    <property type="match status" value="1"/>
</dbReference>
<dbReference type="PANTHER" id="PTHR11693:SF22">
    <property type="entry name" value="ATP SYNTHASE SUBUNIT GAMMA, MITOCHONDRIAL"/>
    <property type="match status" value="1"/>
</dbReference>
<dbReference type="Pfam" id="PF00231">
    <property type="entry name" value="ATP-synt"/>
    <property type="match status" value="1"/>
</dbReference>
<dbReference type="PIRSF" id="PIRSF039089">
    <property type="entry name" value="ATP_synthase_gamma"/>
    <property type="match status" value="1"/>
</dbReference>
<dbReference type="PRINTS" id="PR00126">
    <property type="entry name" value="ATPASEGAMMA"/>
</dbReference>
<dbReference type="SUPFAM" id="SSF52943">
    <property type="entry name" value="ATP synthase (F1-ATPase), gamma subunit"/>
    <property type="match status" value="1"/>
</dbReference>
<dbReference type="PROSITE" id="PS00153">
    <property type="entry name" value="ATPASE_GAMMA"/>
    <property type="match status" value="1"/>
</dbReference>
<evidence type="ECO:0000255" key="1">
    <source>
        <dbReference type="HAMAP-Rule" id="MF_00815"/>
    </source>
</evidence>
<accession>A0LDA1</accession>
<organism>
    <name type="scientific">Magnetococcus marinus (strain ATCC BAA-1437 / JCM 17883 / MC-1)</name>
    <dbReference type="NCBI Taxonomy" id="156889"/>
    <lineage>
        <taxon>Bacteria</taxon>
        <taxon>Pseudomonadati</taxon>
        <taxon>Pseudomonadota</taxon>
        <taxon>Alphaproteobacteria</taxon>
        <taxon>Magnetococcales</taxon>
        <taxon>Magnetococcaceae</taxon>
        <taxon>Magnetococcus</taxon>
    </lineage>
</organism>
<feature type="chain" id="PRO_1000053248" description="ATP synthase gamma chain">
    <location>
        <begin position="1"/>
        <end position="292"/>
    </location>
</feature>